<organism>
    <name type="scientific">Rickettsia montanensis</name>
    <dbReference type="NCBI Taxonomy" id="33991"/>
    <lineage>
        <taxon>Bacteria</taxon>
        <taxon>Pseudomonadati</taxon>
        <taxon>Pseudomonadota</taxon>
        <taxon>Alphaproteobacteria</taxon>
        <taxon>Rickettsiales</taxon>
        <taxon>Rickettsiaceae</taxon>
        <taxon>Rickettsieae</taxon>
        <taxon>Rickettsia</taxon>
        <taxon>spotted fever group</taxon>
    </lineage>
</organism>
<gene>
    <name evidence="1" type="primary">mraY</name>
</gene>
<sequence length="361" mass="39749">MLYNLLLPHVHNSHIANLFHYITFRSGLAIIITLSLSFITGPILIKFLRSLQKNGQPIRSDGPESHQTKVGTPTMGGIMIILSSCLSTLLLADLTNKYIWITLFGFISFGIIGFMDDYAKVTKNNHYGVRGKSKLLLQGIISFIICVLLEYLDKSPSHLLNVPFFKNLSLDLGYFYIVFAMFVIVGSSNAVNLTDGLDGLATVPIAFTAGSFALISYLVGNLIYSNYLQLTYIPNTGELTVLCAGLVGSCLGFLWFNAQPAEVFMGDTGSLSLGGVLGIISVITKHEIVLAIVGGLFVIETTSVILQVYYFKATKGKRIFKMAPLHHHFEKHGWAESKVVIRFWIISVIFALIGLSSLKLR</sequence>
<dbReference type="EC" id="2.7.8.13" evidence="1"/>
<dbReference type="EMBL" id="AJ293315">
    <property type="protein sequence ID" value="CAC33606.1"/>
    <property type="molecule type" value="Genomic_DNA"/>
</dbReference>
<dbReference type="SMR" id="Q9AKP2"/>
<dbReference type="OMA" id="DTPTMGG"/>
<dbReference type="UniPathway" id="UPA00219"/>
<dbReference type="GO" id="GO:0005886">
    <property type="term" value="C:plasma membrane"/>
    <property type="evidence" value="ECO:0007669"/>
    <property type="project" value="UniProtKB-SubCell"/>
</dbReference>
<dbReference type="GO" id="GO:0046872">
    <property type="term" value="F:metal ion binding"/>
    <property type="evidence" value="ECO:0007669"/>
    <property type="project" value="UniProtKB-KW"/>
</dbReference>
<dbReference type="GO" id="GO:0008963">
    <property type="term" value="F:phospho-N-acetylmuramoyl-pentapeptide-transferase activity"/>
    <property type="evidence" value="ECO:0007669"/>
    <property type="project" value="UniProtKB-UniRule"/>
</dbReference>
<dbReference type="GO" id="GO:0051992">
    <property type="term" value="F:UDP-N-acetylmuramoyl-L-alanyl-D-glutamyl-meso-2,6-diaminopimelyl-D-alanyl-D-alanine:undecaprenyl-phosphate transferase activity"/>
    <property type="evidence" value="ECO:0007669"/>
    <property type="project" value="RHEA"/>
</dbReference>
<dbReference type="GO" id="GO:0051301">
    <property type="term" value="P:cell division"/>
    <property type="evidence" value="ECO:0007669"/>
    <property type="project" value="UniProtKB-KW"/>
</dbReference>
<dbReference type="GO" id="GO:0071555">
    <property type="term" value="P:cell wall organization"/>
    <property type="evidence" value="ECO:0007669"/>
    <property type="project" value="UniProtKB-KW"/>
</dbReference>
<dbReference type="GO" id="GO:0009252">
    <property type="term" value="P:peptidoglycan biosynthetic process"/>
    <property type="evidence" value="ECO:0007669"/>
    <property type="project" value="UniProtKB-UniRule"/>
</dbReference>
<dbReference type="GO" id="GO:0008360">
    <property type="term" value="P:regulation of cell shape"/>
    <property type="evidence" value="ECO:0007669"/>
    <property type="project" value="UniProtKB-KW"/>
</dbReference>
<dbReference type="CDD" id="cd06852">
    <property type="entry name" value="GT_MraY"/>
    <property type="match status" value="1"/>
</dbReference>
<dbReference type="HAMAP" id="MF_00038">
    <property type="entry name" value="MraY"/>
    <property type="match status" value="1"/>
</dbReference>
<dbReference type="InterPro" id="IPR000715">
    <property type="entry name" value="Glycosyl_transferase_4"/>
</dbReference>
<dbReference type="InterPro" id="IPR003524">
    <property type="entry name" value="PNAcMuramoyl-5peptid_Trfase"/>
</dbReference>
<dbReference type="InterPro" id="IPR018480">
    <property type="entry name" value="PNAcMuramoyl-5peptid_Trfase_CS"/>
</dbReference>
<dbReference type="NCBIfam" id="TIGR00445">
    <property type="entry name" value="mraY"/>
    <property type="match status" value="1"/>
</dbReference>
<dbReference type="PANTHER" id="PTHR22926">
    <property type="entry name" value="PHOSPHO-N-ACETYLMURAMOYL-PENTAPEPTIDE-TRANSFERASE"/>
    <property type="match status" value="1"/>
</dbReference>
<dbReference type="PANTHER" id="PTHR22926:SF5">
    <property type="entry name" value="PHOSPHO-N-ACETYLMURAMOYL-PENTAPEPTIDE-TRANSFERASE HOMOLOG"/>
    <property type="match status" value="1"/>
</dbReference>
<dbReference type="Pfam" id="PF00953">
    <property type="entry name" value="Glycos_transf_4"/>
    <property type="match status" value="1"/>
</dbReference>
<dbReference type="PROSITE" id="PS01347">
    <property type="entry name" value="MRAY_1"/>
    <property type="match status" value="1"/>
</dbReference>
<dbReference type="PROSITE" id="PS01348">
    <property type="entry name" value="MRAY_2"/>
    <property type="match status" value="1"/>
</dbReference>
<name>MRAY_RICMO</name>
<feature type="chain" id="PRO_0000108879" description="Phospho-N-acetylmuramoyl-pentapeptide-transferase">
    <location>
        <begin position="1"/>
        <end position="361"/>
    </location>
</feature>
<feature type="transmembrane region" description="Helical" evidence="1">
    <location>
        <begin position="28"/>
        <end position="48"/>
    </location>
</feature>
<feature type="transmembrane region" description="Helical" evidence="1">
    <location>
        <begin position="74"/>
        <end position="94"/>
    </location>
</feature>
<feature type="transmembrane region" description="Helical" evidence="1">
    <location>
        <begin position="99"/>
        <end position="119"/>
    </location>
</feature>
<feature type="transmembrane region" description="Helical" evidence="1">
    <location>
        <begin position="133"/>
        <end position="153"/>
    </location>
</feature>
<feature type="transmembrane region" description="Helical" evidence="1">
    <location>
        <begin position="168"/>
        <end position="188"/>
    </location>
</feature>
<feature type="transmembrane region" description="Helical" evidence="1">
    <location>
        <begin position="203"/>
        <end position="223"/>
    </location>
</feature>
<feature type="transmembrane region" description="Helical" evidence="1">
    <location>
        <begin position="236"/>
        <end position="256"/>
    </location>
</feature>
<feature type="transmembrane region" description="Helical" evidence="1">
    <location>
        <begin position="263"/>
        <end position="283"/>
    </location>
</feature>
<feature type="transmembrane region" description="Helical" evidence="1">
    <location>
        <begin position="288"/>
        <end position="308"/>
    </location>
</feature>
<feature type="transmembrane region" description="Helical" evidence="1">
    <location>
        <begin position="338"/>
        <end position="358"/>
    </location>
</feature>
<protein>
    <recommendedName>
        <fullName evidence="1">Phospho-N-acetylmuramoyl-pentapeptide-transferase</fullName>
        <ecNumber evidence="1">2.7.8.13</ecNumber>
    </recommendedName>
    <alternativeName>
        <fullName evidence="1">UDP-MurNAc-pentapeptide phosphotransferase</fullName>
    </alternativeName>
</protein>
<evidence type="ECO:0000255" key="1">
    <source>
        <dbReference type="HAMAP-Rule" id="MF_00038"/>
    </source>
</evidence>
<evidence type="ECO:0000305" key="2"/>
<proteinExistence type="inferred from homology"/>
<keyword id="KW-0131">Cell cycle</keyword>
<keyword id="KW-0132">Cell division</keyword>
<keyword id="KW-1003">Cell membrane</keyword>
<keyword id="KW-0133">Cell shape</keyword>
<keyword id="KW-0961">Cell wall biogenesis/degradation</keyword>
<keyword id="KW-0460">Magnesium</keyword>
<keyword id="KW-0472">Membrane</keyword>
<keyword id="KW-0479">Metal-binding</keyword>
<keyword id="KW-0573">Peptidoglycan synthesis</keyword>
<keyword id="KW-0808">Transferase</keyword>
<keyword id="KW-0812">Transmembrane</keyword>
<keyword id="KW-1133">Transmembrane helix</keyword>
<reference key="1">
    <citation type="journal article" date="2001" name="Mol. Biol. Evol.">
        <title>Pseudogenes, junk DNA, and the dynamics of Rickettsia genomes.</title>
        <authorList>
            <person name="Andersson J.O."/>
            <person name="Andersson S.G.E."/>
        </authorList>
    </citation>
    <scope>NUCLEOTIDE SEQUENCE [GENOMIC DNA]</scope>
</reference>
<accession>Q9AKP2</accession>
<comment type="function">
    <text evidence="1">Catalyzes the initial step of the lipid cycle reactions in the biosynthesis of the cell wall peptidoglycan: transfers peptidoglycan precursor phospho-MurNAc-pentapeptide from UDP-MurNAc-pentapeptide onto the lipid carrier undecaprenyl phosphate, yielding undecaprenyl-pyrophosphoryl-MurNAc-pentapeptide, known as lipid I.</text>
</comment>
<comment type="catalytic activity">
    <reaction evidence="1">
        <text>UDP-N-acetyl-alpha-D-muramoyl-L-alanyl-gamma-D-glutamyl-meso-2,6-diaminopimeloyl-D-alanyl-D-alanine + di-trans,octa-cis-undecaprenyl phosphate = di-trans,octa-cis-undecaprenyl diphospho-N-acetyl-alpha-D-muramoyl-L-alanyl-D-glutamyl-meso-2,6-diaminopimeloyl-D-alanyl-D-alanine + UMP</text>
        <dbReference type="Rhea" id="RHEA:28386"/>
        <dbReference type="ChEBI" id="CHEBI:57865"/>
        <dbReference type="ChEBI" id="CHEBI:60392"/>
        <dbReference type="ChEBI" id="CHEBI:61386"/>
        <dbReference type="ChEBI" id="CHEBI:61387"/>
        <dbReference type="EC" id="2.7.8.13"/>
    </reaction>
</comment>
<comment type="cofactor">
    <cofactor evidence="1">
        <name>Mg(2+)</name>
        <dbReference type="ChEBI" id="CHEBI:18420"/>
    </cofactor>
</comment>
<comment type="pathway">
    <text evidence="1">Cell wall biogenesis; peptidoglycan biosynthesis.</text>
</comment>
<comment type="subcellular location">
    <subcellularLocation>
        <location evidence="1">Cell membrane</location>
        <topology evidence="1">Multi-pass membrane protein</topology>
    </subcellularLocation>
</comment>
<comment type="similarity">
    <text evidence="1 2">Belongs to the glycosyltransferase 4 family. MraY subfamily.</text>
</comment>